<keyword id="KW-0227">DNA damage</keyword>
<keyword id="KW-0234">DNA repair</keyword>
<keyword id="KW-0378">Hydrolase</keyword>
<protein>
    <recommendedName>
        <fullName evidence="1">Putative 3-methyladenine DNA glycosylase</fullName>
        <ecNumber evidence="1">3.2.2.-</ecNumber>
    </recommendedName>
</protein>
<dbReference type="EC" id="3.2.2.-" evidence="1"/>
<dbReference type="EMBL" id="CP000728">
    <property type="protein sequence ID" value="ABS41444.1"/>
    <property type="molecule type" value="Genomic_DNA"/>
</dbReference>
<dbReference type="RefSeq" id="WP_011988121.1">
    <property type="nucleotide sequence ID" value="NC_009699.1"/>
</dbReference>
<dbReference type="SMR" id="A7GCV4"/>
<dbReference type="KEGG" id="cbf:CLI_1349"/>
<dbReference type="HOGENOM" id="CLU_060471_0_2_9"/>
<dbReference type="Proteomes" id="UP000002410">
    <property type="component" value="Chromosome"/>
</dbReference>
<dbReference type="GO" id="GO:0003905">
    <property type="term" value="F:alkylbase DNA N-glycosylase activity"/>
    <property type="evidence" value="ECO:0007669"/>
    <property type="project" value="InterPro"/>
</dbReference>
<dbReference type="GO" id="GO:0003677">
    <property type="term" value="F:DNA binding"/>
    <property type="evidence" value="ECO:0007669"/>
    <property type="project" value="InterPro"/>
</dbReference>
<dbReference type="GO" id="GO:0006284">
    <property type="term" value="P:base-excision repair"/>
    <property type="evidence" value="ECO:0007669"/>
    <property type="project" value="InterPro"/>
</dbReference>
<dbReference type="CDD" id="cd00540">
    <property type="entry name" value="AAG"/>
    <property type="match status" value="1"/>
</dbReference>
<dbReference type="FunFam" id="3.10.300.10:FF:000001">
    <property type="entry name" value="Putative 3-methyladenine DNA glycosylase"/>
    <property type="match status" value="1"/>
</dbReference>
<dbReference type="Gene3D" id="3.10.300.10">
    <property type="entry name" value="Methylpurine-DNA glycosylase (MPG)"/>
    <property type="match status" value="1"/>
</dbReference>
<dbReference type="HAMAP" id="MF_00527">
    <property type="entry name" value="3MGH"/>
    <property type="match status" value="1"/>
</dbReference>
<dbReference type="InterPro" id="IPR011034">
    <property type="entry name" value="Formyl_transferase-like_C_sf"/>
</dbReference>
<dbReference type="InterPro" id="IPR003180">
    <property type="entry name" value="MPG"/>
</dbReference>
<dbReference type="InterPro" id="IPR036995">
    <property type="entry name" value="MPG_sf"/>
</dbReference>
<dbReference type="NCBIfam" id="TIGR00567">
    <property type="entry name" value="3mg"/>
    <property type="match status" value="1"/>
</dbReference>
<dbReference type="NCBIfam" id="NF002001">
    <property type="entry name" value="PRK00802.1-1"/>
    <property type="match status" value="1"/>
</dbReference>
<dbReference type="PANTHER" id="PTHR10429">
    <property type="entry name" value="DNA-3-METHYLADENINE GLYCOSYLASE"/>
    <property type="match status" value="1"/>
</dbReference>
<dbReference type="PANTHER" id="PTHR10429:SF0">
    <property type="entry name" value="DNA-3-METHYLADENINE GLYCOSYLASE"/>
    <property type="match status" value="1"/>
</dbReference>
<dbReference type="Pfam" id="PF02245">
    <property type="entry name" value="Pur_DNA_glyco"/>
    <property type="match status" value="1"/>
</dbReference>
<dbReference type="SUPFAM" id="SSF50486">
    <property type="entry name" value="FMT C-terminal domain-like"/>
    <property type="match status" value="1"/>
</dbReference>
<name>3MGH_CLOBL</name>
<proteinExistence type="inferred from homology"/>
<comment type="similarity">
    <text evidence="1">Belongs to the DNA glycosylase MPG family.</text>
</comment>
<accession>A7GCV4</accession>
<reference key="1">
    <citation type="submission" date="2007-06" db="EMBL/GenBank/DDBJ databases">
        <authorList>
            <person name="Brinkac L.M."/>
            <person name="Daugherty S."/>
            <person name="Dodson R.J."/>
            <person name="Madupu R."/>
            <person name="Brown J.L."/>
            <person name="Bruce D."/>
            <person name="Detter C."/>
            <person name="Munk C."/>
            <person name="Smith L.A."/>
            <person name="Smith T.J."/>
            <person name="White O."/>
            <person name="Brettin T.S."/>
        </authorList>
    </citation>
    <scope>NUCLEOTIDE SEQUENCE [LARGE SCALE GENOMIC DNA]</scope>
    <source>
        <strain>Langeland / NCTC 10281 / Type F</strain>
    </source>
</reference>
<organism>
    <name type="scientific">Clostridium botulinum (strain Langeland / NCTC 10281 / Type F)</name>
    <dbReference type="NCBI Taxonomy" id="441772"/>
    <lineage>
        <taxon>Bacteria</taxon>
        <taxon>Bacillati</taxon>
        <taxon>Bacillota</taxon>
        <taxon>Clostridia</taxon>
        <taxon>Eubacteriales</taxon>
        <taxon>Clostridiaceae</taxon>
        <taxon>Clostridium</taxon>
    </lineage>
</organism>
<feature type="chain" id="PRO_1000050987" description="Putative 3-methyladenine DNA glycosylase">
    <location>
        <begin position="1"/>
        <end position="203"/>
    </location>
</feature>
<gene>
    <name type="ordered locus">CLI_1349</name>
</gene>
<sequence length="203" mass="23553">MRLTRDFYAKDARALAKELLGKVLVREVDGIKLKGKIVETEAYIGAIDKASHAYGGRRTKRTEPLYGKPGIAYVYFIYGKYFCFNIISKTEGEAEGVLIRALEPLENINLISKLRFNKEFEELNNYQRKNITSGPSKLCMAFNINRDNNWEDLCESSSLYVEDVFYNDFEIIETVRVGIDYAEEARDFLWRYYIKDNAFVSVK</sequence>
<evidence type="ECO:0000255" key="1">
    <source>
        <dbReference type="HAMAP-Rule" id="MF_00527"/>
    </source>
</evidence>